<sequence length="399" mass="42758">MAATTAAVVAEEDTELRDLLVQTLENSGVLNRIKAELRAAVFLALEEQEKVENKTPLVNENLKKFLNTKDGRLVASLVAEFLQFFNLDFTLAVFHPETSTIQGLEGRENLAQDLGIIEAEGTVGGPLLLEVIRRCQQKEKGPASVEGALDLSDGHPPSKSPEGKSSANSTPSKIPRYKGQGKKKTIGQKPGDKKTSSETSQSEPSVSLSESKSKSSLHSLAHETRIASFLSSSAVDARDSSALCPDGDDVEGDSFFDDPIPKPEKTYGWRAEPRKQVGGLASLSDKPHLRSGLSSLAGAPSLTDPESKRGSTVLKDLKLVGEKIGSLGLGTGEDEDYADDFNSASHRSEKSELSIGEEIEEDLSMGVEDGNTSDKLDDLTQDLTVSQLSDVADYLEDVA</sequence>
<reference key="1">
    <citation type="journal article" date="2005" name="Science">
        <title>The transcriptional landscape of the mammalian genome.</title>
        <authorList>
            <person name="Carninci P."/>
            <person name="Kasukawa T."/>
            <person name="Katayama S."/>
            <person name="Gough J."/>
            <person name="Frith M.C."/>
            <person name="Maeda N."/>
            <person name="Oyama R."/>
            <person name="Ravasi T."/>
            <person name="Lenhard B."/>
            <person name="Wells C."/>
            <person name="Kodzius R."/>
            <person name="Shimokawa K."/>
            <person name="Bajic V.B."/>
            <person name="Brenner S.E."/>
            <person name="Batalov S."/>
            <person name="Forrest A.R."/>
            <person name="Zavolan M."/>
            <person name="Davis M.J."/>
            <person name="Wilming L.G."/>
            <person name="Aidinis V."/>
            <person name="Allen J.E."/>
            <person name="Ambesi-Impiombato A."/>
            <person name="Apweiler R."/>
            <person name="Aturaliya R.N."/>
            <person name="Bailey T.L."/>
            <person name="Bansal M."/>
            <person name="Baxter L."/>
            <person name="Beisel K.W."/>
            <person name="Bersano T."/>
            <person name="Bono H."/>
            <person name="Chalk A.M."/>
            <person name="Chiu K.P."/>
            <person name="Choudhary V."/>
            <person name="Christoffels A."/>
            <person name="Clutterbuck D.R."/>
            <person name="Crowe M.L."/>
            <person name="Dalla E."/>
            <person name="Dalrymple B.P."/>
            <person name="de Bono B."/>
            <person name="Della Gatta G."/>
            <person name="di Bernardo D."/>
            <person name="Down T."/>
            <person name="Engstrom P."/>
            <person name="Fagiolini M."/>
            <person name="Faulkner G."/>
            <person name="Fletcher C.F."/>
            <person name="Fukushima T."/>
            <person name="Furuno M."/>
            <person name="Futaki S."/>
            <person name="Gariboldi M."/>
            <person name="Georgii-Hemming P."/>
            <person name="Gingeras T.R."/>
            <person name="Gojobori T."/>
            <person name="Green R.E."/>
            <person name="Gustincich S."/>
            <person name="Harbers M."/>
            <person name="Hayashi Y."/>
            <person name="Hensch T.K."/>
            <person name="Hirokawa N."/>
            <person name="Hill D."/>
            <person name="Huminiecki L."/>
            <person name="Iacono M."/>
            <person name="Ikeo K."/>
            <person name="Iwama A."/>
            <person name="Ishikawa T."/>
            <person name="Jakt M."/>
            <person name="Kanapin A."/>
            <person name="Katoh M."/>
            <person name="Kawasawa Y."/>
            <person name="Kelso J."/>
            <person name="Kitamura H."/>
            <person name="Kitano H."/>
            <person name="Kollias G."/>
            <person name="Krishnan S.P."/>
            <person name="Kruger A."/>
            <person name="Kummerfeld S.K."/>
            <person name="Kurochkin I.V."/>
            <person name="Lareau L.F."/>
            <person name="Lazarevic D."/>
            <person name="Lipovich L."/>
            <person name="Liu J."/>
            <person name="Liuni S."/>
            <person name="McWilliam S."/>
            <person name="Madan Babu M."/>
            <person name="Madera M."/>
            <person name="Marchionni L."/>
            <person name="Matsuda H."/>
            <person name="Matsuzawa S."/>
            <person name="Miki H."/>
            <person name="Mignone F."/>
            <person name="Miyake S."/>
            <person name="Morris K."/>
            <person name="Mottagui-Tabar S."/>
            <person name="Mulder N."/>
            <person name="Nakano N."/>
            <person name="Nakauchi H."/>
            <person name="Ng P."/>
            <person name="Nilsson R."/>
            <person name="Nishiguchi S."/>
            <person name="Nishikawa S."/>
            <person name="Nori F."/>
            <person name="Ohara O."/>
            <person name="Okazaki Y."/>
            <person name="Orlando V."/>
            <person name="Pang K.C."/>
            <person name="Pavan W.J."/>
            <person name="Pavesi G."/>
            <person name="Pesole G."/>
            <person name="Petrovsky N."/>
            <person name="Piazza S."/>
            <person name="Reed J."/>
            <person name="Reid J.F."/>
            <person name="Ring B.Z."/>
            <person name="Ringwald M."/>
            <person name="Rost B."/>
            <person name="Ruan Y."/>
            <person name="Salzberg S.L."/>
            <person name="Sandelin A."/>
            <person name="Schneider C."/>
            <person name="Schoenbach C."/>
            <person name="Sekiguchi K."/>
            <person name="Semple C.A."/>
            <person name="Seno S."/>
            <person name="Sessa L."/>
            <person name="Sheng Y."/>
            <person name="Shibata Y."/>
            <person name="Shimada H."/>
            <person name="Shimada K."/>
            <person name="Silva D."/>
            <person name="Sinclair B."/>
            <person name="Sperling S."/>
            <person name="Stupka E."/>
            <person name="Sugiura K."/>
            <person name="Sultana R."/>
            <person name="Takenaka Y."/>
            <person name="Taki K."/>
            <person name="Tammoja K."/>
            <person name="Tan S.L."/>
            <person name="Tang S."/>
            <person name="Taylor M.S."/>
            <person name="Tegner J."/>
            <person name="Teichmann S.A."/>
            <person name="Ueda H.R."/>
            <person name="van Nimwegen E."/>
            <person name="Verardo R."/>
            <person name="Wei C.L."/>
            <person name="Yagi K."/>
            <person name="Yamanishi H."/>
            <person name="Zabarovsky E."/>
            <person name="Zhu S."/>
            <person name="Zimmer A."/>
            <person name="Hide W."/>
            <person name="Bult C."/>
            <person name="Grimmond S.M."/>
            <person name="Teasdale R.D."/>
            <person name="Liu E.T."/>
            <person name="Brusic V."/>
            <person name="Quackenbush J."/>
            <person name="Wahlestedt C."/>
            <person name="Mattick J.S."/>
            <person name="Hume D.A."/>
            <person name="Kai C."/>
            <person name="Sasaki D."/>
            <person name="Tomaru Y."/>
            <person name="Fukuda S."/>
            <person name="Kanamori-Katayama M."/>
            <person name="Suzuki M."/>
            <person name="Aoki J."/>
            <person name="Arakawa T."/>
            <person name="Iida J."/>
            <person name="Imamura K."/>
            <person name="Itoh M."/>
            <person name="Kato T."/>
            <person name="Kawaji H."/>
            <person name="Kawagashira N."/>
            <person name="Kawashima T."/>
            <person name="Kojima M."/>
            <person name="Kondo S."/>
            <person name="Konno H."/>
            <person name="Nakano K."/>
            <person name="Ninomiya N."/>
            <person name="Nishio T."/>
            <person name="Okada M."/>
            <person name="Plessy C."/>
            <person name="Shibata K."/>
            <person name="Shiraki T."/>
            <person name="Suzuki S."/>
            <person name="Tagami M."/>
            <person name="Waki K."/>
            <person name="Watahiki A."/>
            <person name="Okamura-Oho Y."/>
            <person name="Suzuki H."/>
            <person name="Kawai J."/>
            <person name="Hayashizaki Y."/>
        </authorList>
    </citation>
    <scope>NUCLEOTIDE SEQUENCE [LARGE SCALE MRNA] (ISOFORM 2)</scope>
    <source>
        <strain>C57BL/6J</strain>
        <tissue>Forelimb</tissue>
        <tissue>Liver</tissue>
        <tissue>Skin</tissue>
    </source>
</reference>
<reference key="2">
    <citation type="journal article" date="2004" name="Genome Res.">
        <title>The status, quality, and expansion of the NIH full-length cDNA project: the Mammalian Gene Collection (MGC).</title>
        <authorList>
            <consortium name="The MGC Project Team"/>
        </authorList>
    </citation>
    <scope>NUCLEOTIDE SEQUENCE [LARGE SCALE MRNA] (ISOFORM 1)</scope>
    <scope>VARIANT ARG-20</scope>
    <source>
        <strain>C57BL/6J</strain>
        <strain>NMRI</strain>
        <tissue>Embryo</tissue>
        <tissue>Mammary tumor</tissue>
    </source>
</reference>
<reference key="3">
    <citation type="journal article" date="2007" name="J. Immunol.">
        <title>Quantitative time-resolved phosphoproteomic analysis of mast cell signaling.</title>
        <authorList>
            <person name="Cao L."/>
            <person name="Yu K."/>
            <person name="Banh C."/>
            <person name="Nguyen V."/>
            <person name="Ritz A."/>
            <person name="Raphael B.J."/>
            <person name="Kawakami Y."/>
            <person name="Kawakami T."/>
            <person name="Salomon A.R."/>
        </authorList>
    </citation>
    <scope>PHOSPHORYLATION [LARGE SCALE ANALYSIS] AT TYR-337</scope>
    <scope>IDENTIFICATION BY MASS SPECTROMETRY [LARGE SCALE ANALYSIS]</scope>
    <source>
        <tissue>Mast cell</tissue>
    </source>
</reference>
<reference key="4">
    <citation type="journal article" date="2009" name="Immunity">
        <title>The phagosomal proteome in interferon-gamma-activated macrophages.</title>
        <authorList>
            <person name="Trost M."/>
            <person name="English L."/>
            <person name="Lemieux S."/>
            <person name="Courcelles M."/>
            <person name="Desjardins M."/>
            <person name="Thibault P."/>
        </authorList>
    </citation>
    <scope>IDENTIFICATION BY MASS SPECTROMETRY [LARGE SCALE ANALYSIS]</scope>
</reference>
<reference key="5">
    <citation type="journal article" date="2010" name="Cell">
        <title>A tissue-specific atlas of mouse protein phosphorylation and expression.</title>
        <authorList>
            <person name="Huttlin E.L."/>
            <person name="Jedrychowski M.P."/>
            <person name="Elias J.E."/>
            <person name="Goswami T."/>
            <person name="Rad R."/>
            <person name="Beausoleil S.A."/>
            <person name="Villen J."/>
            <person name="Haas W."/>
            <person name="Sowa M.E."/>
            <person name="Gygi S.P."/>
        </authorList>
    </citation>
    <scope>IDENTIFICATION BY MASS SPECTROMETRY [LARGE SCALE ANALYSIS]</scope>
    <source>
        <tissue>Kidney</tissue>
        <tissue>Pancreas</tissue>
        <tissue>Spleen</tissue>
        <tissue>Testis</tissue>
    </source>
</reference>
<comment type="function">
    <text evidence="1">Required for anchoring microtubules to the centrosomes. Required for ciliation.</text>
</comment>
<comment type="subunit">
    <text evidence="1">Homodimer. Part of a ternary complex that contains CEP350, CEP43 and MAPRE1. Interacts directly with CEP350 and MAPRE1. Interacts with CEP19. Interacts (via N-terminus) with CEP350 (via C-terminus).</text>
</comment>
<comment type="subcellular location">
    <subcellularLocation>
        <location evidence="1">Cytoplasm</location>
        <location evidence="1">Cytoskeleton</location>
        <location evidence="1">Microtubule organizing center</location>
        <location evidence="1">Centrosome</location>
    </subcellularLocation>
    <subcellularLocation>
        <location evidence="1">Cytoplasm</location>
        <location evidence="1">Cytoskeleton</location>
        <location evidence="1">Microtubule organizing center</location>
        <location evidence="1">Centrosome</location>
        <location evidence="1">Centriole</location>
    </subcellularLocation>
    <subcellularLocation>
        <location evidence="1">Cytoplasm</location>
        <location evidence="1">Cytoskeleton</location>
        <location evidence="1">Cilium basal body</location>
    </subcellularLocation>
    <text evidence="1">Associated with gamma-tubulin. Localizes on both mother and daughter centrioles. Localizes to an axial position on the mother centriole. Localizes to the distal end of the centriole partly to the subdistal appendage region.</text>
</comment>
<comment type="alternative products">
    <event type="alternative splicing"/>
    <isoform>
        <id>Q66JX5-1</id>
        <name>1</name>
        <sequence type="displayed"/>
    </isoform>
    <isoform>
        <id>Q66JX5-2</id>
        <name>2</name>
        <sequence type="described" ref="VSP_018122"/>
    </isoform>
</comment>
<comment type="similarity">
    <text evidence="6">Belongs to the CEP43 family.</text>
</comment>
<evidence type="ECO:0000250" key="1">
    <source>
        <dbReference type="UniProtKB" id="O95684"/>
    </source>
</evidence>
<evidence type="ECO:0000255" key="2">
    <source>
        <dbReference type="PROSITE-ProRule" id="PRU00126"/>
    </source>
</evidence>
<evidence type="ECO:0000256" key="3">
    <source>
        <dbReference type="SAM" id="MobiDB-lite"/>
    </source>
</evidence>
<evidence type="ECO:0000269" key="4">
    <source>
    </source>
</evidence>
<evidence type="ECO:0000303" key="5">
    <source>
    </source>
</evidence>
<evidence type="ECO:0000305" key="6"/>
<evidence type="ECO:0000312" key="7">
    <source>
        <dbReference type="MGI" id="MGI:1922546"/>
    </source>
</evidence>
<evidence type="ECO:0007744" key="8">
    <source>
    </source>
</evidence>
<protein>
    <recommendedName>
        <fullName evidence="6">Centrosomal protein 43</fullName>
    </recommendedName>
    <alternativeName>
        <fullName>FGFR1 oncogene partner</fullName>
    </alternativeName>
</protein>
<name>CEP43_MOUSE</name>
<gene>
    <name evidence="7" type="primary">Cep43</name>
    <name evidence="7" type="synonym">Fgfr1op</name>
</gene>
<keyword id="KW-0025">Alternative splicing</keyword>
<keyword id="KW-0966">Cell projection</keyword>
<keyword id="KW-0970">Cilium biogenesis/degradation</keyword>
<keyword id="KW-0963">Cytoplasm</keyword>
<keyword id="KW-0206">Cytoskeleton</keyword>
<keyword id="KW-0597">Phosphoprotein</keyword>
<keyword id="KW-1185">Reference proteome</keyword>
<feature type="chain" id="PRO_0000233295" description="Centrosomal protein 43">
    <location>
        <begin position="1"/>
        <end position="399"/>
    </location>
</feature>
<feature type="domain" description="LisH" evidence="2">
    <location>
        <begin position="70"/>
        <end position="102"/>
    </location>
</feature>
<feature type="region of interest" description="Disordered" evidence="3">
    <location>
        <begin position="142"/>
        <end position="216"/>
    </location>
</feature>
<feature type="region of interest" description="Disordered" evidence="3">
    <location>
        <begin position="236"/>
        <end position="311"/>
    </location>
</feature>
<feature type="region of interest" description="Disordered" evidence="3">
    <location>
        <begin position="328"/>
        <end position="354"/>
    </location>
</feature>
<feature type="compositionally biased region" description="Polar residues" evidence="3">
    <location>
        <begin position="163"/>
        <end position="172"/>
    </location>
</feature>
<feature type="compositionally biased region" description="Basic residues" evidence="3">
    <location>
        <begin position="175"/>
        <end position="186"/>
    </location>
</feature>
<feature type="compositionally biased region" description="Low complexity" evidence="3">
    <location>
        <begin position="197"/>
        <end position="216"/>
    </location>
</feature>
<feature type="compositionally biased region" description="Acidic residues" evidence="3">
    <location>
        <begin position="246"/>
        <end position="256"/>
    </location>
</feature>
<feature type="compositionally biased region" description="Basic and acidic residues" evidence="3">
    <location>
        <begin position="259"/>
        <end position="275"/>
    </location>
</feature>
<feature type="compositionally biased region" description="Low complexity" evidence="3">
    <location>
        <begin position="290"/>
        <end position="302"/>
    </location>
</feature>
<feature type="modified residue" description="Phosphoserine" evidence="1">
    <location>
        <position position="152"/>
    </location>
</feature>
<feature type="modified residue" description="Phosphoserine" evidence="1">
    <location>
        <position position="160"/>
    </location>
</feature>
<feature type="modified residue" description="Phosphothreonine" evidence="1">
    <location>
        <position position="170"/>
    </location>
</feature>
<feature type="modified residue" description="Phosphoserine" evidence="1">
    <location>
        <position position="202"/>
    </location>
</feature>
<feature type="modified residue" description="Phosphoserine" evidence="1">
    <location>
        <position position="301"/>
    </location>
</feature>
<feature type="modified residue" description="Phosphoserine" evidence="1">
    <location>
        <position position="326"/>
    </location>
</feature>
<feature type="modified residue" description="Phosphotyrosine" evidence="8">
    <location>
        <position position="337"/>
    </location>
</feature>
<feature type="splice variant" id="VSP_018122" description="In isoform 2." evidence="5">
    <location>
        <begin position="174"/>
        <end position="193"/>
    </location>
</feature>
<feature type="sequence variant" description="In strain: C57BL/6J." evidence="4">
    <original>L</original>
    <variation>R</variation>
    <location>
        <position position="20"/>
    </location>
</feature>
<accession>Q66JX5</accession>
<accession>Q32P17</accession>
<accession>Q8BH91</accession>
<dbReference type="EMBL" id="AK028778">
    <property type="protein sequence ID" value="BAC26115.1"/>
    <property type="molecule type" value="mRNA"/>
</dbReference>
<dbReference type="EMBL" id="AK031261">
    <property type="protein sequence ID" value="BAC27326.1"/>
    <property type="molecule type" value="mRNA"/>
</dbReference>
<dbReference type="EMBL" id="AK050389">
    <property type="protein sequence ID" value="BAC34230.1"/>
    <property type="molecule type" value="mRNA"/>
</dbReference>
<dbReference type="EMBL" id="BC080717">
    <property type="protein sequence ID" value="AAH80717.1"/>
    <property type="molecule type" value="mRNA"/>
</dbReference>
<dbReference type="EMBL" id="BC108331">
    <property type="protein sequence ID" value="AAI08332.1"/>
    <property type="molecule type" value="mRNA"/>
</dbReference>
<dbReference type="CCDS" id="CCDS28380.1">
    <molecule id="Q66JX5-2"/>
</dbReference>
<dbReference type="CCDS" id="CCDS57045.1">
    <molecule id="Q66JX5-1"/>
</dbReference>
<dbReference type="RefSeq" id="NP_001183975.1">
    <molecule id="Q66JX5-1"/>
    <property type="nucleotide sequence ID" value="NM_001197046.1"/>
</dbReference>
<dbReference type="RefSeq" id="NP_957682.1">
    <molecule id="Q66JX5-2"/>
    <property type="nucleotide sequence ID" value="NM_201230.5"/>
</dbReference>
<dbReference type="RefSeq" id="XP_030105984.1">
    <molecule id="Q66JX5-1"/>
    <property type="nucleotide sequence ID" value="XM_030250124.2"/>
</dbReference>
<dbReference type="SMR" id="Q66JX5"/>
<dbReference type="BioGRID" id="217370">
    <property type="interactions" value="49"/>
</dbReference>
<dbReference type="FunCoup" id="Q66JX5">
    <property type="interactions" value="1381"/>
</dbReference>
<dbReference type="IntAct" id="Q66JX5">
    <property type="interactions" value="50"/>
</dbReference>
<dbReference type="STRING" id="10090.ENSMUSP00000095030"/>
<dbReference type="GlyGen" id="Q66JX5">
    <property type="glycosylation" value="1 site"/>
</dbReference>
<dbReference type="iPTMnet" id="Q66JX5"/>
<dbReference type="PhosphoSitePlus" id="Q66JX5"/>
<dbReference type="SwissPalm" id="Q66JX5"/>
<dbReference type="jPOST" id="Q66JX5"/>
<dbReference type="PaxDb" id="10090-ENSMUSP00000024636"/>
<dbReference type="PeptideAtlas" id="Q66JX5"/>
<dbReference type="ProteomicsDB" id="271604">
    <molecule id="Q66JX5-1"/>
</dbReference>
<dbReference type="ProteomicsDB" id="271605">
    <molecule id="Q66JX5-2"/>
</dbReference>
<dbReference type="Pumba" id="Q66JX5"/>
<dbReference type="Antibodypedia" id="33532">
    <property type="antibodies" value="292 antibodies from 32 providers"/>
</dbReference>
<dbReference type="Ensembl" id="ENSMUST00000024636.15">
    <molecule id="Q66JX5-2"/>
    <property type="protein sequence ID" value="ENSMUSP00000024636.9"/>
    <property type="gene ID" value="ENSMUSG00000069135.12"/>
</dbReference>
<dbReference type="Ensembl" id="ENSMUST00000097419.10">
    <molecule id="Q66JX5-1"/>
    <property type="protein sequence ID" value="ENSMUSP00000095030.4"/>
    <property type="gene ID" value="ENSMUSG00000069135.12"/>
</dbReference>
<dbReference type="GeneID" id="75296"/>
<dbReference type="KEGG" id="mmu:75296"/>
<dbReference type="UCSC" id="uc008ajb.2">
    <molecule id="Q66JX5-2"/>
    <property type="organism name" value="mouse"/>
</dbReference>
<dbReference type="UCSC" id="uc008ajc.2">
    <molecule id="Q66JX5-1"/>
    <property type="organism name" value="mouse"/>
</dbReference>
<dbReference type="AGR" id="MGI:1922546"/>
<dbReference type="CTD" id="11116"/>
<dbReference type="MGI" id="MGI:1922546">
    <property type="gene designation" value="Cep43"/>
</dbReference>
<dbReference type="VEuPathDB" id="HostDB:ENSMUSG00000069135"/>
<dbReference type="eggNOG" id="ENOG502QR70">
    <property type="taxonomic scope" value="Eukaryota"/>
</dbReference>
<dbReference type="GeneTree" id="ENSGT00390000007441"/>
<dbReference type="HOGENOM" id="CLU_039837_2_0_1"/>
<dbReference type="InParanoid" id="Q66JX5"/>
<dbReference type="OMA" id="DITQDHT"/>
<dbReference type="PhylomeDB" id="Q66JX5"/>
<dbReference type="TreeFam" id="TF331893"/>
<dbReference type="Reactome" id="R-MMU-2565942">
    <property type="pathway name" value="Regulation of PLK1 Activity at G2/M Transition"/>
</dbReference>
<dbReference type="Reactome" id="R-MMU-380259">
    <property type="pathway name" value="Loss of Nlp from mitotic centrosomes"/>
</dbReference>
<dbReference type="Reactome" id="R-MMU-380270">
    <property type="pathway name" value="Recruitment of mitotic centrosome proteins and complexes"/>
</dbReference>
<dbReference type="Reactome" id="R-MMU-380284">
    <property type="pathway name" value="Loss of proteins required for interphase microtubule organization from the centrosome"/>
</dbReference>
<dbReference type="Reactome" id="R-MMU-380320">
    <property type="pathway name" value="Recruitment of NuMA to mitotic centrosomes"/>
</dbReference>
<dbReference type="Reactome" id="R-MMU-5620912">
    <property type="pathway name" value="Anchoring of the basal body to the plasma membrane"/>
</dbReference>
<dbReference type="Reactome" id="R-MMU-8854518">
    <property type="pathway name" value="AURKA Activation by TPX2"/>
</dbReference>
<dbReference type="BioGRID-ORCS" id="75296">
    <property type="hits" value="13 hits in 79 CRISPR screens"/>
</dbReference>
<dbReference type="ChiTaRS" id="Fgfr1op">
    <property type="organism name" value="mouse"/>
</dbReference>
<dbReference type="PRO" id="PR:Q66JX5"/>
<dbReference type="Proteomes" id="UP000000589">
    <property type="component" value="Chromosome 17"/>
</dbReference>
<dbReference type="RNAct" id="Q66JX5">
    <property type="molecule type" value="protein"/>
</dbReference>
<dbReference type="Bgee" id="ENSMUSG00000069135">
    <property type="expression patterns" value="Expressed in ear vesicle and 227 other cell types or tissues"/>
</dbReference>
<dbReference type="ExpressionAtlas" id="Q66JX5">
    <property type="expression patterns" value="baseline and differential"/>
</dbReference>
<dbReference type="GO" id="GO:0042995">
    <property type="term" value="C:cell projection"/>
    <property type="evidence" value="ECO:0007669"/>
    <property type="project" value="UniProtKB-KW"/>
</dbReference>
<dbReference type="GO" id="GO:0005814">
    <property type="term" value="C:centriole"/>
    <property type="evidence" value="ECO:0007669"/>
    <property type="project" value="UniProtKB-SubCell"/>
</dbReference>
<dbReference type="GO" id="GO:0005813">
    <property type="term" value="C:centrosome"/>
    <property type="evidence" value="ECO:0007669"/>
    <property type="project" value="UniProtKB-SubCell"/>
</dbReference>
<dbReference type="GO" id="GO:0005634">
    <property type="term" value="C:nucleus"/>
    <property type="evidence" value="ECO:0007669"/>
    <property type="project" value="Ensembl"/>
</dbReference>
<dbReference type="GO" id="GO:0048471">
    <property type="term" value="C:perinuclear region of cytoplasm"/>
    <property type="evidence" value="ECO:0007669"/>
    <property type="project" value="Ensembl"/>
</dbReference>
<dbReference type="GO" id="GO:0042803">
    <property type="term" value="F:protein homodimerization activity"/>
    <property type="evidence" value="ECO:0007669"/>
    <property type="project" value="Ensembl"/>
</dbReference>
<dbReference type="GO" id="GO:0019901">
    <property type="term" value="F:protein kinase binding"/>
    <property type="evidence" value="ECO:0007669"/>
    <property type="project" value="Ensembl"/>
</dbReference>
<dbReference type="GO" id="GO:0030292">
    <property type="term" value="F:protein tyrosine kinase inhibitor activity"/>
    <property type="evidence" value="ECO:0007669"/>
    <property type="project" value="Ensembl"/>
</dbReference>
<dbReference type="GO" id="GO:0030030">
    <property type="term" value="P:cell projection organization"/>
    <property type="evidence" value="ECO:0007669"/>
    <property type="project" value="UniProtKB-KW"/>
</dbReference>
<dbReference type="GO" id="GO:0034453">
    <property type="term" value="P:microtubule anchoring"/>
    <property type="evidence" value="ECO:0007669"/>
    <property type="project" value="InterPro"/>
</dbReference>
<dbReference type="GO" id="GO:0030307">
    <property type="term" value="P:positive regulation of cell growth"/>
    <property type="evidence" value="ECO:0007669"/>
    <property type="project" value="Ensembl"/>
</dbReference>
<dbReference type="GO" id="GO:0030335">
    <property type="term" value="P:positive regulation of cell migration"/>
    <property type="evidence" value="ECO:0007669"/>
    <property type="project" value="Ensembl"/>
</dbReference>
<dbReference type="GO" id="GO:0008284">
    <property type="term" value="P:positive regulation of cell population proliferation"/>
    <property type="evidence" value="ECO:0007669"/>
    <property type="project" value="Ensembl"/>
</dbReference>
<dbReference type="FunFam" id="1.20.960.40:FF:000001">
    <property type="entry name" value="FGFR1 oncogene partner"/>
    <property type="match status" value="1"/>
</dbReference>
<dbReference type="Gene3D" id="1.20.960.40">
    <property type="match status" value="1"/>
</dbReference>
<dbReference type="InterPro" id="IPR018993">
    <property type="entry name" value="FOP_dimerisation-dom_N"/>
</dbReference>
<dbReference type="InterPro" id="IPR006594">
    <property type="entry name" value="LisH"/>
</dbReference>
<dbReference type="PANTHER" id="PTHR15431:SF9">
    <property type="entry name" value="CENTROSOMAL PROTEIN 43"/>
    <property type="match status" value="1"/>
</dbReference>
<dbReference type="PANTHER" id="PTHR15431">
    <property type="entry name" value="FGFR1 ONCOGENE PARTNER/LISH DOMAIN-CONTAINING PROTEIN"/>
    <property type="match status" value="1"/>
</dbReference>
<dbReference type="Pfam" id="PF09398">
    <property type="entry name" value="FOP_dimer"/>
    <property type="match status" value="1"/>
</dbReference>
<dbReference type="PROSITE" id="PS50896">
    <property type="entry name" value="LISH"/>
    <property type="match status" value="1"/>
</dbReference>
<proteinExistence type="evidence at protein level"/>
<organism>
    <name type="scientific">Mus musculus</name>
    <name type="common">Mouse</name>
    <dbReference type="NCBI Taxonomy" id="10090"/>
    <lineage>
        <taxon>Eukaryota</taxon>
        <taxon>Metazoa</taxon>
        <taxon>Chordata</taxon>
        <taxon>Craniata</taxon>
        <taxon>Vertebrata</taxon>
        <taxon>Euteleostomi</taxon>
        <taxon>Mammalia</taxon>
        <taxon>Eutheria</taxon>
        <taxon>Euarchontoglires</taxon>
        <taxon>Glires</taxon>
        <taxon>Rodentia</taxon>
        <taxon>Myomorpha</taxon>
        <taxon>Muroidea</taxon>
        <taxon>Muridae</taxon>
        <taxon>Murinae</taxon>
        <taxon>Mus</taxon>
        <taxon>Mus</taxon>
    </lineage>
</organism>